<proteinExistence type="inferred from homology"/>
<comment type="function">
    <text evidence="1">Catalyzes a reversible aldol reaction between acetaldehyde and D-glyceraldehyde 3-phosphate to generate 2-deoxy-D-ribose 5-phosphate.</text>
</comment>
<comment type="catalytic activity">
    <reaction evidence="1">
        <text>2-deoxy-D-ribose 5-phosphate = D-glyceraldehyde 3-phosphate + acetaldehyde</text>
        <dbReference type="Rhea" id="RHEA:12821"/>
        <dbReference type="ChEBI" id="CHEBI:15343"/>
        <dbReference type="ChEBI" id="CHEBI:59776"/>
        <dbReference type="ChEBI" id="CHEBI:62877"/>
        <dbReference type="EC" id="4.1.2.4"/>
    </reaction>
</comment>
<comment type="pathway">
    <text evidence="1">Carbohydrate degradation; 2-deoxy-D-ribose 1-phosphate degradation; D-glyceraldehyde 3-phosphate and acetaldehyde from 2-deoxy-alpha-D-ribose 1-phosphate: step 2/2.</text>
</comment>
<comment type="subcellular location">
    <subcellularLocation>
        <location evidence="1">Cytoplasm</location>
    </subcellularLocation>
</comment>
<comment type="similarity">
    <text evidence="1">Belongs to the DeoC/FbaB aldolase family. DeoC type 1 subfamily.</text>
</comment>
<gene>
    <name evidence="1" type="primary">deoC</name>
    <name type="ordered locus">mhp544</name>
</gene>
<reference key="1">
    <citation type="journal article" date="2004" name="J. Bacteriol.">
        <title>The genome sequence of Mycoplasma hyopneumoniae strain 232, the agent of swine mycoplasmosis.</title>
        <authorList>
            <person name="Minion F.C."/>
            <person name="Lefkowitz E.J."/>
            <person name="Madsen M.L."/>
            <person name="Cleary B.J."/>
            <person name="Swartzell S.M."/>
            <person name="Mahairas G.G."/>
        </authorList>
    </citation>
    <scope>NUCLEOTIDE SEQUENCE [LARGE SCALE GENOMIC DNA]</scope>
    <source>
        <strain>232</strain>
    </source>
</reference>
<feature type="chain" id="PRO_0000231551" description="Deoxyribose-phosphate aldolase">
    <location>
        <begin position="1"/>
        <end position="221"/>
    </location>
</feature>
<feature type="active site" description="Proton donor/acceptor" evidence="1">
    <location>
        <position position="89"/>
    </location>
</feature>
<feature type="active site" description="Schiff-base intermediate with acetaldehyde" evidence="1">
    <location>
        <position position="151"/>
    </location>
</feature>
<feature type="active site" description="Proton donor/acceptor" evidence="1">
    <location>
        <position position="180"/>
    </location>
</feature>
<sequence length="221" mass="24473">MNFNVIIDHTLLKPQATSQDIKILIEEAKKYNFGAICIAPIWVKLAKKELKNTNIKIVTVIGFPLGSQISAIKQKEASLAIAHGADEIDMVMNIGKFKEKDFQFIINEINQIKKEIGAKILKVIIETALLSPHEIADATKLVSSTNADFIKTSTGFSYRGASEQDLKIIKENKSEKLAIKAAGGITNLADMENFYRLGATRFGTSKSLSIIKNLTDKKNQY</sequence>
<dbReference type="EC" id="4.1.2.4" evidence="1"/>
<dbReference type="EMBL" id="AE017332">
    <property type="protein sequence ID" value="AAV27945.1"/>
    <property type="molecule type" value="Genomic_DNA"/>
</dbReference>
<dbReference type="RefSeq" id="WP_011206377.1">
    <property type="nucleotide sequence ID" value="NC_006360.1"/>
</dbReference>
<dbReference type="SMR" id="Q600B2"/>
<dbReference type="KEGG" id="mhy:mhp544"/>
<dbReference type="eggNOG" id="COG0274">
    <property type="taxonomic scope" value="Bacteria"/>
</dbReference>
<dbReference type="HOGENOM" id="CLU_053595_0_2_14"/>
<dbReference type="PhylomeDB" id="Q600B2"/>
<dbReference type="UniPathway" id="UPA00002">
    <property type="reaction ID" value="UER00468"/>
</dbReference>
<dbReference type="Proteomes" id="UP000006822">
    <property type="component" value="Chromosome"/>
</dbReference>
<dbReference type="GO" id="GO:0005737">
    <property type="term" value="C:cytoplasm"/>
    <property type="evidence" value="ECO:0007669"/>
    <property type="project" value="UniProtKB-SubCell"/>
</dbReference>
<dbReference type="GO" id="GO:0004139">
    <property type="term" value="F:deoxyribose-phosphate aldolase activity"/>
    <property type="evidence" value="ECO:0007669"/>
    <property type="project" value="UniProtKB-UniRule"/>
</dbReference>
<dbReference type="GO" id="GO:0006018">
    <property type="term" value="P:2-deoxyribose 1-phosphate catabolic process"/>
    <property type="evidence" value="ECO:0007669"/>
    <property type="project" value="UniProtKB-UniRule"/>
</dbReference>
<dbReference type="GO" id="GO:0016052">
    <property type="term" value="P:carbohydrate catabolic process"/>
    <property type="evidence" value="ECO:0007669"/>
    <property type="project" value="TreeGrafter"/>
</dbReference>
<dbReference type="GO" id="GO:0009264">
    <property type="term" value="P:deoxyribonucleotide catabolic process"/>
    <property type="evidence" value="ECO:0007669"/>
    <property type="project" value="InterPro"/>
</dbReference>
<dbReference type="CDD" id="cd00959">
    <property type="entry name" value="DeoC"/>
    <property type="match status" value="1"/>
</dbReference>
<dbReference type="FunFam" id="3.20.20.70:FF:000044">
    <property type="entry name" value="Deoxyribose-phosphate aldolase"/>
    <property type="match status" value="1"/>
</dbReference>
<dbReference type="Gene3D" id="3.20.20.70">
    <property type="entry name" value="Aldolase class I"/>
    <property type="match status" value="1"/>
</dbReference>
<dbReference type="HAMAP" id="MF_00114">
    <property type="entry name" value="DeoC_type1"/>
    <property type="match status" value="1"/>
</dbReference>
<dbReference type="InterPro" id="IPR013785">
    <property type="entry name" value="Aldolase_TIM"/>
</dbReference>
<dbReference type="InterPro" id="IPR011343">
    <property type="entry name" value="DeoC"/>
</dbReference>
<dbReference type="InterPro" id="IPR002915">
    <property type="entry name" value="DeoC/FbaB/LacD_aldolase"/>
</dbReference>
<dbReference type="InterPro" id="IPR028581">
    <property type="entry name" value="DeoC_typeI"/>
</dbReference>
<dbReference type="NCBIfam" id="TIGR00126">
    <property type="entry name" value="deoC"/>
    <property type="match status" value="1"/>
</dbReference>
<dbReference type="PANTHER" id="PTHR10889">
    <property type="entry name" value="DEOXYRIBOSE-PHOSPHATE ALDOLASE"/>
    <property type="match status" value="1"/>
</dbReference>
<dbReference type="PANTHER" id="PTHR10889:SF1">
    <property type="entry name" value="DEOXYRIBOSE-PHOSPHATE ALDOLASE"/>
    <property type="match status" value="1"/>
</dbReference>
<dbReference type="Pfam" id="PF01791">
    <property type="entry name" value="DeoC"/>
    <property type="match status" value="1"/>
</dbReference>
<dbReference type="PIRSF" id="PIRSF001357">
    <property type="entry name" value="DeoC"/>
    <property type="match status" value="1"/>
</dbReference>
<dbReference type="SMART" id="SM01133">
    <property type="entry name" value="DeoC"/>
    <property type="match status" value="1"/>
</dbReference>
<dbReference type="SUPFAM" id="SSF51569">
    <property type="entry name" value="Aldolase"/>
    <property type="match status" value="1"/>
</dbReference>
<accession>Q600B2</accession>
<protein>
    <recommendedName>
        <fullName evidence="1">Deoxyribose-phosphate aldolase</fullName>
        <shortName evidence="1">DERA</shortName>
        <ecNumber evidence="1">4.1.2.4</ecNumber>
    </recommendedName>
    <alternativeName>
        <fullName evidence="1">2-deoxy-D-ribose 5-phosphate aldolase</fullName>
    </alternativeName>
    <alternativeName>
        <fullName evidence="1">Phosphodeoxyriboaldolase</fullName>
        <shortName evidence="1">Deoxyriboaldolase</shortName>
    </alternativeName>
</protein>
<keyword id="KW-0963">Cytoplasm</keyword>
<keyword id="KW-0456">Lyase</keyword>
<keyword id="KW-0704">Schiff base</keyword>
<name>DEOC_MESH2</name>
<evidence type="ECO:0000255" key="1">
    <source>
        <dbReference type="HAMAP-Rule" id="MF_00114"/>
    </source>
</evidence>
<organism>
    <name type="scientific">Mesomycoplasma hyopneumoniae (strain 232)</name>
    <name type="common">Mycoplasma hyopneumoniae</name>
    <dbReference type="NCBI Taxonomy" id="295358"/>
    <lineage>
        <taxon>Bacteria</taxon>
        <taxon>Bacillati</taxon>
        <taxon>Mycoplasmatota</taxon>
        <taxon>Mycoplasmoidales</taxon>
        <taxon>Metamycoplasmataceae</taxon>
        <taxon>Mesomycoplasma</taxon>
    </lineage>
</organism>